<dbReference type="EMBL" id="AJ488167">
    <property type="protein sequence ID" value="CAD32481.1"/>
    <property type="molecule type" value="Genomic_DNA"/>
</dbReference>
<dbReference type="SMR" id="Q8MID5"/>
<dbReference type="Proteomes" id="UP000694394">
    <property type="component" value="Unplaced"/>
</dbReference>
<dbReference type="GO" id="GO:0005634">
    <property type="term" value="C:nucleus"/>
    <property type="evidence" value="ECO:0007669"/>
    <property type="project" value="UniProtKB-SubCell"/>
</dbReference>
<dbReference type="GO" id="GO:0000981">
    <property type="term" value="F:DNA-binding transcription factor activity, RNA polymerase II-specific"/>
    <property type="evidence" value="ECO:0007669"/>
    <property type="project" value="InterPro"/>
</dbReference>
<dbReference type="GO" id="GO:0046983">
    <property type="term" value="F:protein dimerization activity"/>
    <property type="evidence" value="ECO:0007669"/>
    <property type="project" value="InterPro"/>
</dbReference>
<dbReference type="GO" id="GO:0000977">
    <property type="term" value="F:RNA polymerase II transcription regulatory region sequence-specific DNA binding"/>
    <property type="evidence" value="ECO:0007669"/>
    <property type="project" value="TreeGrafter"/>
</dbReference>
<dbReference type="GO" id="GO:0030154">
    <property type="term" value="P:cell differentiation"/>
    <property type="evidence" value="ECO:0007669"/>
    <property type="project" value="UniProtKB-KW"/>
</dbReference>
<dbReference type="GO" id="GO:0007517">
    <property type="term" value="P:muscle organ development"/>
    <property type="evidence" value="ECO:0007669"/>
    <property type="project" value="UniProtKB-KW"/>
</dbReference>
<dbReference type="GO" id="GO:0045892">
    <property type="term" value="P:negative regulation of DNA-templated transcription"/>
    <property type="evidence" value="ECO:0000250"/>
    <property type="project" value="UniProtKB"/>
</dbReference>
<dbReference type="GO" id="GO:0048511">
    <property type="term" value="P:rhythmic process"/>
    <property type="evidence" value="ECO:0007669"/>
    <property type="project" value="UniProtKB-KW"/>
</dbReference>
<dbReference type="CDD" id="cd11412">
    <property type="entry name" value="bHLH_TS_TWIST1"/>
    <property type="match status" value="1"/>
</dbReference>
<dbReference type="FunFam" id="4.10.280.10:FF:000030">
    <property type="entry name" value="Twist transcription factor"/>
    <property type="match status" value="1"/>
</dbReference>
<dbReference type="Gene3D" id="4.10.280.10">
    <property type="entry name" value="Helix-loop-helix DNA-binding domain"/>
    <property type="match status" value="1"/>
</dbReference>
<dbReference type="InterPro" id="IPR011598">
    <property type="entry name" value="bHLH_dom"/>
</dbReference>
<dbReference type="InterPro" id="IPR050283">
    <property type="entry name" value="E-box_TF_Regulators"/>
</dbReference>
<dbReference type="InterPro" id="IPR036638">
    <property type="entry name" value="HLH_DNA-bd_sf"/>
</dbReference>
<dbReference type="InterPro" id="IPR047093">
    <property type="entry name" value="TWIST1_bHLH"/>
</dbReference>
<dbReference type="PANTHER" id="PTHR23349">
    <property type="entry name" value="BASIC HELIX-LOOP-HELIX TRANSCRIPTION FACTOR, TWIST"/>
    <property type="match status" value="1"/>
</dbReference>
<dbReference type="PANTHER" id="PTHR23349:SF64">
    <property type="entry name" value="TWIST-RELATED PROTEIN 1"/>
    <property type="match status" value="1"/>
</dbReference>
<dbReference type="Pfam" id="PF00010">
    <property type="entry name" value="HLH"/>
    <property type="match status" value="1"/>
</dbReference>
<dbReference type="SMART" id="SM00353">
    <property type="entry name" value="HLH"/>
    <property type="match status" value="1"/>
</dbReference>
<dbReference type="SUPFAM" id="SSF47459">
    <property type="entry name" value="HLH, helix-loop-helix DNA-binding domain"/>
    <property type="match status" value="1"/>
</dbReference>
<dbReference type="PROSITE" id="PS50888">
    <property type="entry name" value="BHLH"/>
    <property type="match status" value="1"/>
</dbReference>
<reference key="1">
    <citation type="journal article" date="2002" name="Dev. Genes Evol.">
        <title>Natural Twist protein variants in a panel of eleven non-human primates: possible implications of Twist gene-tree for primate species tree.</title>
        <authorList>
            <person name="Gachot-Neveu H."/>
            <person name="Stoetzel C."/>
            <person name="Quillet R."/>
            <person name="Dollfus H."/>
            <person name="Perrin-Schmitt F."/>
        </authorList>
    </citation>
    <scope>NUCLEOTIDE SEQUENCE [GENOMIC DNA]</scope>
    <source>
        <tissue>Blood</tissue>
    </source>
</reference>
<gene>
    <name type="primary">TWIST1</name>
    <name type="synonym">TWIST</name>
</gene>
<proteinExistence type="inferred from homology"/>
<comment type="function">
    <text evidence="2">Acts as a transcriptional regulator. Inhibits myogenesis by sequestrating E proteins, inhibiting trans-activation by MEF2, and inhibiting DNA-binding by MYOD1 through physical interaction. This interaction probably involves the basic domains of both proteins. Also represses expression of pro-inflammatory cytokines such as TNFA and IL1B. Regulates cranial suture patterning and fusion. Activates transcription as a heterodimer with E proteins. Regulates gene expression differentially, depending on dimer composition. Homodimers induce expression of FGFR2 and POSTN while heterodimers repress FGFR2 and POSTN expression and induce THBS1 expression. Heterodimerization is also required for osteoblast differentiation. Represses the activity of the circadian transcriptional activator: NPAS2-BMAL1 heterodimer (By similarity).</text>
</comment>
<comment type="subunit">
    <text evidence="2">Efficient DNA binding requires dimerization with another bHLH protein. Homodimer or heterodimer with E proteins such as TCF3. ID1 binds preferentially to TCF3 but does not interact efficiently with TWIST1 so ID1 levels control the amount of TCF3 available to dimerize with TWIST and thus determine the type of dimer formed (By similarity).</text>
</comment>
<comment type="subcellular location">
    <subcellularLocation>
        <location evidence="3">Nucleus</location>
    </subcellularLocation>
</comment>
<feature type="chain" id="PRO_0000284945" description="Twist-related protein 1">
    <location>
        <begin position="1"/>
        <end position="199"/>
    </location>
</feature>
<feature type="domain" description="bHLH" evidence="3">
    <location>
        <begin position="105"/>
        <end position="156"/>
    </location>
</feature>
<feature type="region of interest" description="Disordered" evidence="4">
    <location>
        <begin position="1"/>
        <end position="102"/>
    </location>
</feature>
<feature type="region of interest" description="Sufficient for transactivation activity" evidence="1">
    <location>
        <begin position="158"/>
        <end position="188"/>
    </location>
</feature>
<feature type="compositionally biased region" description="Low complexity" evidence="4">
    <location>
        <begin position="1"/>
        <end position="18"/>
    </location>
</feature>
<feature type="compositionally biased region" description="Basic residues" evidence="4">
    <location>
        <begin position="34"/>
        <end position="43"/>
    </location>
</feature>
<feature type="compositionally biased region" description="Gly residues" evidence="4">
    <location>
        <begin position="46"/>
        <end position="65"/>
    </location>
</feature>
<feature type="compositionally biased region" description="Gly residues" evidence="4">
    <location>
        <begin position="80"/>
        <end position="96"/>
    </location>
</feature>
<accession>Q8MID5</accession>
<organism>
    <name type="scientific">Microcebus murinus</name>
    <name type="common">Gray mouse lemur</name>
    <name type="synonym">Lemur murinus</name>
    <dbReference type="NCBI Taxonomy" id="30608"/>
    <lineage>
        <taxon>Eukaryota</taxon>
        <taxon>Metazoa</taxon>
        <taxon>Chordata</taxon>
        <taxon>Craniata</taxon>
        <taxon>Vertebrata</taxon>
        <taxon>Euteleostomi</taxon>
        <taxon>Mammalia</taxon>
        <taxon>Eutheria</taxon>
        <taxon>Euarchontoglires</taxon>
        <taxon>Primates</taxon>
        <taxon>Strepsirrhini</taxon>
        <taxon>Lemuriformes</taxon>
        <taxon>Cheirogaleidae</taxon>
        <taxon>Microcebus</taxon>
    </lineage>
</organism>
<keyword id="KW-0010">Activator</keyword>
<keyword id="KW-0090">Biological rhythms</keyword>
<keyword id="KW-0217">Developmental protein</keyword>
<keyword id="KW-0221">Differentiation</keyword>
<keyword id="KW-0238">DNA-binding</keyword>
<keyword id="KW-0517">Myogenesis</keyword>
<keyword id="KW-0539">Nucleus</keyword>
<keyword id="KW-1185">Reference proteome</keyword>
<keyword id="KW-0678">Repressor</keyword>
<keyword id="KW-0804">Transcription</keyword>
<keyword id="KW-0805">Transcription regulation</keyword>
<sequence length="199" mass="20783">MMQDVSSSPVSPADDSLSNSEEEPDRQQPPSGKRGGRKRRSSRRSAGGGAGPGGAAGGGVGGGDEPGSPAQGKRGKKSAGCGGGAGGGGSSSGGGSPQSYEELQTQRVMANVRERQRTQSLNEAFAALRKIIPTLPSDKLSKIQTLKLAARYIDFLYQVLQSDELDSKMASCSYVAHERLSYAFSVWRMEGAWSMSASH</sequence>
<protein>
    <recommendedName>
        <fullName>Twist-related protein 1</fullName>
    </recommendedName>
</protein>
<evidence type="ECO:0000250" key="1"/>
<evidence type="ECO:0000250" key="2">
    <source>
        <dbReference type="UniProtKB" id="P26687"/>
    </source>
</evidence>
<evidence type="ECO:0000255" key="3">
    <source>
        <dbReference type="PROSITE-ProRule" id="PRU00981"/>
    </source>
</evidence>
<evidence type="ECO:0000256" key="4">
    <source>
        <dbReference type="SAM" id="MobiDB-lite"/>
    </source>
</evidence>
<name>TWST1_MICMU</name>